<protein>
    <recommendedName>
        <fullName evidence="1">ATP phosphoribosyltransferase</fullName>
        <shortName evidence="1">ATP-PRT</shortName>
        <shortName evidence="1">ATP-PRTase</shortName>
        <ecNumber evidence="1">2.4.2.17</ecNumber>
    </recommendedName>
</protein>
<reference key="1">
    <citation type="journal article" date="2009" name="J. Bacteriol.">
        <title>Complete genome sequence and comparative genome analysis of enteropathogenic Escherichia coli O127:H6 strain E2348/69.</title>
        <authorList>
            <person name="Iguchi A."/>
            <person name="Thomson N.R."/>
            <person name="Ogura Y."/>
            <person name="Saunders D."/>
            <person name="Ooka T."/>
            <person name="Henderson I.R."/>
            <person name="Harris D."/>
            <person name="Asadulghani M."/>
            <person name="Kurokawa K."/>
            <person name="Dean P."/>
            <person name="Kenny B."/>
            <person name="Quail M.A."/>
            <person name="Thurston S."/>
            <person name="Dougan G."/>
            <person name="Hayashi T."/>
            <person name="Parkhill J."/>
            <person name="Frankel G."/>
        </authorList>
    </citation>
    <scope>NUCLEOTIDE SEQUENCE [LARGE SCALE GENOMIC DNA]</scope>
    <source>
        <strain>E2348/69 / EPEC</strain>
    </source>
</reference>
<feature type="chain" id="PRO_1000118250" description="ATP phosphoribosyltransferase">
    <location>
        <begin position="1"/>
        <end position="299"/>
    </location>
</feature>
<dbReference type="EC" id="2.4.2.17" evidence="1"/>
<dbReference type="EMBL" id="FM180568">
    <property type="protein sequence ID" value="CAS09708.1"/>
    <property type="molecule type" value="Genomic_DNA"/>
</dbReference>
<dbReference type="RefSeq" id="WP_000131782.1">
    <property type="nucleotide sequence ID" value="NC_011601.1"/>
</dbReference>
<dbReference type="SMR" id="B7UT56"/>
<dbReference type="GeneID" id="93775154"/>
<dbReference type="KEGG" id="ecg:E2348C_2160"/>
<dbReference type="HOGENOM" id="CLU_038115_1_0_6"/>
<dbReference type="UniPathway" id="UPA00031">
    <property type="reaction ID" value="UER00006"/>
</dbReference>
<dbReference type="Proteomes" id="UP000008205">
    <property type="component" value="Chromosome"/>
</dbReference>
<dbReference type="GO" id="GO:0005737">
    <property type="term" value="C:cytoplasm"/>
    <property type="evidence" value="ECO:0007669"/>
    <property type="project" value="UniProtKB-SubCell"/>
</dbReference>
<dbReference type="GO" id="GO:0005524">
    <property type="term" value="F:ATP binding"/>
    <property type="evidence" value="ECO:0007669"/>
    <property type="project" value="UniProtKB-KW"/>
</dbReference>
<dbReference type="GO" id="GO:0003879">
    <property type="term" value="F:ATP phosphoribosyltransferase activity"/>
    <property type="evidence" value="ECO:0007669"/>
    <property type="project" value="UniProtKB-UniRule"/>
</dbReference>
<dbReference type="GO" id="GO:0000287">
    <property type="term" value="F:magnesium ion binding"/>
    <property type="evidence" value="ECO:0007669"/>
    <property type="project" value="UniProtKB-UniRule"/>
</dbReference>
<dbReference type="GO" id="GO:0000105">
    <property type="term" value="P:L-histidine biosynthetic process"/>
    <property type="evidence" value="ECO:0007669"/>
    <property type="project" value="UniProtKB-UniRule"/>
</dbReference>
<dbReference type="CDD" id="cd13592">
    <property type="entry name" value="PBP2_HisGL2"/>
    <property type="match status" value="1"/>
</dbReference>
<dbReference type="FunFam" id="3.30.70.120:FF:000002">
    <property type="entry name" value="ATP phosphoribosyltransferase"/>
    <property type="match status" value="1"/>
</dbReference>
<dbReference type="FunFam" id="3.40.190.10:FF:000008">
    <property type="entry name" value="ATP phosphoribosyltransferase"/>
    <property type="match status" value="1"/>
</dbReference>
<dbReference type="Gene3D" id="3.30.70.120">
    <property type="match status" value="1"/>
</dbReference>
<dbReference type="Gene3D" id="3.40.190.10">
    <property type="entry name" value="Periplasmic binding protein-like II"/>
    <property type="match status" value="2"/>
</dbReference>
<dbReference type="HAMAP" id="MF_00079">
    <property type="entry name" value="HisG_Long"/>
    <property type="match status" value="1"/>
</dbReference>
<dbReference type="InterPro" id="IPR020621">
    <property type="entry name" value="ATP-PRT_HisG_long"/>
</dbReference>
<dbReference type="InterPro" id="IPR013820">
    <property type="entry name" value="ATP_PRibTrfase_cat"/>
</dbReference>
<dbReference type="InterPro" id="IPR018198">
    <property type="entry name" value="ATP_PRibTrfase_CS"/>
</dbReference>
<dbReference type="InterPro" id="IPR001348">
    <property type="entry name" value="ATP_PRibTrfase_HisG"/>
</dbReference>
<dbReference type="InterPro" id="IPR013115">
    <property type="entry name" value="HisG_C"/>
</dbReference>
<dbReference type="InterPro" id="IPR011322">
    <property type="entry name" value="N-reg_PII-like_a/b"/>
</dbReference>
<dbReference type="InterPro" id="IPR015867">
    <property type="entry name" value="N-reg_PII/ATP_PRibTrfase_C"/>
</dbReference>
<dbReference type="NCBIfam" id="TIGR00070">
    <property type="entry name" value="hisG"/>
    <property type="match status" value="1"/>
</dbReference>
<dbReference type="NCBIfam" id="TIGR03455">
    <property type="entry name" value="HisG_C-term"/>
    <property type="match status" value="1"/>
</dbReference>
<dbReference type="PANTHER" id="PTHR21403:SF8">
    <property type="entry name" value="ATP PHOSPHORIBOSYLTRANSFERASE"/>
    <property type="match status" value="1"/>
</dbReference>
<dbReference type="PANTHER" id="PTHR21403">
    <property type="entry name" value="ATP PHOSPHORIBOSYLTRANSFERASE ATP-PRTASE"/>
    <property type="match status" value="1"/>
</dbReference>
<dbReference type="Pfam" id="PF01634">
    <property type="entry name" value="HisG"/>
    <property type="match status" value="1"/>
</dbReference>
<dbReference type="Pfam" id="PF08029">
    <property type="entry name" value="HisG_C"/>
    <property type="match status" value="1"/>
</dbReference>
<dbReference type="SUPFAM" id="SSF54913">
    <property type="entry name" value="GlnB-like"/>
    <property type="match status" value="1"/>
</dbReference>
<dbReference type="SUPFAM" id="SSF53850">
    <property type="entry name" value="Periplasmic binding protein-like II"/>
    <property type="match status" value="1"/>
</dbReference>
<dbReference type="PROSITE" id="PS01316">
    <property type="entry name" value="ATP_P_PHORIBOSYLTR"/>
    <property type="match status" value="1"/>
</dbReference>
<proteinExistence type="inferred from homology"/>
<name>HIS1_ECO27</name>
<accession>B7UT56</accession>
<keyword id="KW-0028">Amino-acid biosynthesis</keyword>
<keyword id="KW-0067">ATP-binding</keyword>
<keyword id="KW-0963">Cytoplasm</keyword>
<keyword id="KW-0328">Glycosyltransferase</keyword>
<keyword id="KW-0368">Histidine biosynthesis</keyword>
<keyword id="KW-0460">Magnesium</keyword>
<keyword id="KW-0479">Metal-binding</keyword>
<keyword id="KW-0547">Nucleotide-binding</keyword>
<keyword id="KW-1185">Reference proteome</keyword>
<keyword id="KW-0808">Transferase</keyword>
<comment type="function">
    <text evidence="1">Catalyzes the condensation of ATP and 5-phosphoribose 1-diphosphate to form N'-(5'-phosphoribosyl)-ATP (PR-ATP). Has a crucial role in the pathway because the rate of histidine biosynthesis seems to be controlled primarily by regulation of HisG enzymatic activity.</text>
</comment>
<comment type="catalytic activity">
    <reaction evidence="1">
        <text>1-(5-phospho-beta-D-ribosyl)-ATP + diphosphate = 5-phospho-alpha-D-ribose 1-diphosphate + ATP</text>
        <dbReference type="Rhea" id="RHEA:18473"/>
        <dbReference type="ChEBI" id="CHEBI:30616"/>
        <dbReference type="ChEBI" id="CHEBI:33019"/>
        <dbReference type="ChEBI" id="CHEBI:58017"/>
        <dbReference type="ChEBI" id="CHEBI:73183"/>
        <dbReference type="EC" id="2.4.2.17"/>
    </reaction>
</comment>
<comment type="cofactor">
    <cofactor evidence="1">
        <name>Mg(2+)</name>
        <dbReference type="ChEBI" id="CHEBI:18420"/>
    </cofactor>
</comment>
<comment type="activity regulation">
    <text evidence="1">Feedback inhibited by histidine.</text>
</comment>
<comment type="pathway">
    <text evidence="1">Amino-acid biosynthesis; L-histidine biosynthesis; L-histidine from 5-phospho-alpha-D-ribose 1-diphosphate: step 1/9.</text>
</comment>
<comment type="subunit">
    <text evidence="1">Equilibrium between an active dimeric form, an inactive hexameric form and higher aggregates. Interconversion between the various forms is largely reversible and is influenced by the natural substrates and inhibitors of the enzyme.</text>
</comment>
<comment type="subcellular location">
    <subcellularLocation>
        <location evidence="1">Cytoplasm</location>
    </subcellularLocation>
</comment>
<comment type="similarity">
    <text evidence="1">Belongs to the ATP phosphoribosyltransferase family. Long subfamily.</text>
</comment>
<sequence>MTDNTRLRIAMQKSGRLSDDSRELLARCGIKINLHTQRLIAMAENMPIDILRVRDDDIPGLVMDGVVDLGIIGENVLEEELLNRRAQGEDPRYFTLRRLDFGGCRLSLATPVDEAWDGPLSLNGKRIATSYPHLLKRYLDQKGISFKSCLLNGSVEVAPRAGLADAICDLVSTGATLEANGLREVEVIYRSKACLIQRDGEMEESKQQLIDKLLTRIQGVIQARESKYIMMHAPTERLDEVIALLPGAERPTILPLAGDQQRVAMHMVSSETLFWETMEKLKALGASSILVLPIEKMME</sequence>
<organism>
    <name type="scientific">Escherichia coli O127:H6 (strain E2348/69 / EPEC)</name>
    <dbReference type="NCBI Taxonomy" id="574521"/>
    <lineage>
        <taxon>Bacteria</taxon>
        <taxon>Pseudomonadati</taxon>
        <taxon>Pseudomonadota</taxon>
        <taxon>Gammaproteobacteria</taxon>
        <taxon>Enterobacterales</taxon>
        <taxon>Enterobacteriaceae</taxon>
        <taxon>Escherichia</taxon>
    </lineage>
</organism>
<evidence type="ECO:0000255" key="1">
    <source>
        <dbReference type="HAMAP-Rule" id="MF_00079"/>
    </source>
</evidence>
<gene>
    <name evidence="1" type="primary">hisG</name>
    <name type="ordered locus">E2348C_2160</name>
</gene>